<organism>
    <name type="scientific">Arabidopsis thaliana</name>
    <name type="common">Mouse-ear cress</name>
    <dbReference type="NCBI Taxonomy" id="3702"/>
    <lineage>
        <taxon>Eukaryota</taxon>
        <taxon>Viridiplantae</taxon>
        <taxon>Streptophyta</taxon>
        <taxon>Embryophyta</taxon>
        <taxon>Tracheophyta</taxon>
        <taxon>Spermatophyta</taxon>
        <taxon>Magnoliopsida</taxon>
        <taxon>eudicotyledons</taxon>
        <taxon>Gunneridae</taxon>
        <taxon>Pentapetalae</taxon>
        <taxon>rosids</taxon>
        <taxon>malvids</taxon>
        <taxon>Brassicales</taxon>
        <taxon>Brassicaceae</taxon>
        <taxon>Camelineae</taxon>
        <taxon>Arabidopsis</taxon>
    </lineage>
</organism>
<gene>
    <name evidence="10" type="primary">CLE21</name>
    <name evidence="12" type="ordered locus">At5g64800</name>
    <name evidence="13" type="ORF">MXK3.2</name>
</gene>
<proteinExistence type="evidence at transcript level"/>
<dbReference type="EMBL" id="AB019236">
    <property type="protein sequence ID" value="BAA97292.1"/>
    <property type="molecule type" value="Genomic_DNA"/>
</dbReference>
<dbReference type="EMBL" id="CP002688">
    <property type="protein sequence ID" value="AED97952.1"/>
    <property type="molecule type" value="Genomic_DNA"/>
</dbReference>
<dbReference type="RefSeq" id="NP_001318877.1">
    <property type="nucleotide sequence ID" value="NM_001345649.1"/>
</dbReference>
<dbReference type="STRING" id="3702.Q9LV97"/>
<dbReference type="GlyCosmos" id="Q9LV97">
    <property type="glycosylation" value="2 sites, No reported glycans"/>
</dbReference>
<dbReference type="GlyGen" id="Q9LV97">
    <property type="glycosylation" value="1 site"/>
</dbReference>
<dbReference type="PaxDb" id="3702-AT5G64800.1"/>
<dbReference type="EnsemblPlants" id="AT5G64800.1">
    <property type="protein sequence ID" value="AT5G64800.1"/>
    <property type="gene ID" value="AT5G64800"/>
</dbReference>
<dbReference type="GeneID" id="28721288"/>
<dbReference type="Gramene" id="AT5G64800.1">
    <property type="protein sequence ID" value="AT5G64800.1"/>
    <property type="gene ID" value="AT5G64800"/>
</dbReference>
<dbReference type="KEGG" id="ath:AT5G64800"/>
<dbReference type="Araport" id="AT5G64800"/>
<dbReference type="TAIR" id="AT5G64800">
    <property type="gene designation" value="CLE21"/>
</dbReference>
<dbReference type="HOGENOM" id="CLU_176520_0_0_1"/>
<dbReference type="InParanoid" id="Q9LV97"/>
<dbReference type="OMA" id="YAMKRDV"/>
<dbReference type="PRO" id="PR:Q9LV97"/>
<dbReference type="Proteomes" id="UP000006548">
    <property type="component" value="Chromosome 5"/>
</dbReference>
<dbReference type="ExpressionAtlas" id="Q9LV97">
    <property type="expression patterns" value="baseline and differential"/>
</dbReference>
<dbReference type="GO" id="GO:0048046">
    <property type="term" value="C:apoplast"/>
    <property type="evidence" value="ECO:0000255"/>
    <property type="project" value="TAIR"/>
</dbReference>
<dbReference type="GO" id="GO:0045168">
    <property type="term" value="P:cell-cell signaling involved in cell fate commitment"/>
    <property type="evidence" value="ECO:0000250"/>
    <property type="project" value="UniProtKB"/>
</dbReference>
<dbReference type="GO" id="GO:0010078">
    <property type="term" value="P:maintenance of root meristem identity"/>
    <property type="evidence" value="ECO:0000314"/>
    <property type="project" value="UniProtKB"/>
</dbReference>
<dbReference type="GO" id="GO:0010088">
    <property type="term" value="P:phloem development"/>
    <property type="evidence" value="ECO:0000314"/>
    <property type="project" value="UniProtKB"/>
</dbReference>
<dbReference type="GO" id="GO:0045595">
    <property type="term" value="P:regulation of cell differentiation"/>
    <property type="evidence" value="ECO:0000314"/>
    <property type="project" value="UniProtKB"/>
</dbReference>
<dbReference type="InterPro" id="IPR033249">
    <property type="entry name" value="CLE_plant"/>
</dbReference>
<dbReference type="PANTHER" id="PTHR34545">
    <property type="entry name" value="CLAVATA3/ESR (CLE)-RELATED PROTEIN 22"/>
    <property type="match status" value="1"/>
</dbReference>
<dbReference type="PANTHER" id="PTHR34545:SF8">
    <property type="entry name" value="CLAVATA3_ESR (CLE)-RELATED PROTEIN 21"/>
    <property type="match status" value="1"/>
</dbReference>
<protein>
    <recommendedName>
        <fullName evidence="10">CLAVATA3/ESR (CLE)-related protein 21</fullName>
    </recommendedName>
    <component>
        <recommendedName>
            <fullName evidence="10">CLE21p</fullName>
        </recommendedName>
    </component>
</protein>
<comment type="function">
    <molecule>CLE21p</molecule>
    <text evidence="6 7 8 9">Extracellular signal peptide that regulates cell fate. Represses root apical meristem maintenance. Regulates the transition of protophloem cells from proliferation to differentiation, thus impinging on postembryonic growth capacity of the root meristem; this signaling pathway requires CRN and CLV2 (PubMed:28607033).</text>
</comment>
<comment type="subcellular location">
    <molecule>CLE21p</molecule>
    <subcellularLocation>
        <location evidence="1">Secreted</location>
        <location evidence="1">Extracellular space</location>
    </subcellularLocation>
</comment>
<comment type="tissue specificity">
    <molecule>CLE21p</molecule>
    <text evidence="5">Mostly expressed in leaves and apex, and, to a lower extent, in seedlings, flowers, stems and siliques.</text>
</comment>
<comment type="PTM">
    <molecule>CLE21p</molecule>
    <text evidence="1">The O-glycosylation (arabinosylation) of the hydroxyproline Pro-100 enhances binding affinity of the CLE21p peptide for its receptor.</text>
</comment>
<comment type="similarity">
    <text evidence="11">Belongs to the CLV3/ESR signal peptide family.</text>
</comment>
<evidence type="ECO:0000250" key="1">
    <source>
        <dbReference type="UniProtKB" id="O49519"/>
    </source>
</evidence>
<evidence type="ECO:0000255" key="2"/>
<evidence type="ECO:0000255" key="3">
    <source>
        <dbReference type="PROSITE-ProRule" id="PRU00498"/>
    </source>
</evidence>
<evidence type="ECO:0000256" key="4">
    <source>
        <dbReference type="SAM" id="MobiDB-lite"/>
    </source>
</evidence>
<evidence type="ECO:0000269" key="5">
    <source>
    </source>
</evidence>
<evidence type="ECO:0000269" key="6">
    <source>
    </source>
</evidence>
<evidence type="ECO:0000269" key="7">
    <source>
    </source>
</evidence>
<evidence type="ECO:0000269" key="8">
    <source>
    </source>
</evidence>
<evidence type="ECO:0000269" key="9">
    <source>
    </source>
</evidence>
<evidence type="ECO:0000303" key="10">
    <source>
    </source>
</evidence>
<evidence type="ECO:0000305" key="11"/>
<evidence type="ECO:0000312" key="12">
    <source>
        <dbReference type="Araport" id="AT5G64800"/>
    </source>
</evidence>
<evidence type="ECO:0000312" key="13">
    <source>
        <dbReference type="EMBL" id="BAA97292.1"/>
    </source>
</evidence>
<accession>Q9LV97</accession>
<sequence>MLILSSRYAMKRDVLIIVIFTVLVLIIISRSSSIQAGRFMTTGRNRNLSVARSLYYKNHHKVVITEMSNFNKVRRRSSRFRRKTDGDEEEEEKRSIPTGPNPLHNK</sequence>
<feature type="signal peptide" evidence="2">
    <location>
        <begin position="1"/>
        <end position="31"/>
    </location>
</feature>
<feature type="chain" id="PRO_0000401271" description="CLAVATA3/ESR (CLE)-related protein 21">
    <location>
        <begin position="32"/>
        <end position="106"/>
    </location>
</feature>
<feature type="peptide" id="PRO_0000401272" description="CLE21p" evidence="1">
    <location>
        <begin position="94"/>
        <end position="105"/>
    </location>
</feature>
<feature type="region of interest" description="Disordered" evidence="4">
    <location>
        <begin position="72"/>
        <end position="106"/>
    </location>
</feature>
<feature type="compositionally biased region" description="Basic residues" evidence="4">
    <location>
        <begin position="72"/>
        <end position="82"/>
    </location>
</feature>
<feature type="modified residue" description="Hydroxyproline" evidence="1">
    <location>
        <position position="97"/>
    </location>
</feature>
<feature type="modified residue" description="Hydroxyproline" evidence="1">
    <location>
        <position position="100"/>
    </location>
</feature>
<feature type="glycosylation site" description="N-linked (GlcNAc...) asparagine" evidence="3">
    <location>
        <position position="47"/>
    </location>
</feature>
<feature type="glycosylation site" description="O-linked (Ara...) hydroxyproline" evidence="1">
    <location>
        <position position="100"/>
    </location>
</feature>
<reference key="1">
    <citation type="journal article" date="2000" name="DNA Res.">
        <title>Structural analysis of Arabidopsis thaliana chromosome 5. X. Sequence features of the regions of 3,076,755 bp covered by sixty P1 and TAC clones.</title>
        <authorList>
            <person name="Sato S."/>
            <person name="Nakamura Y."/>
            <person name="Kaneko T."/>
            <person name="Katoh T."/>
            <person name="Asamizu E."/>
            <person name="Kotani H."/>
            <person name="Tabata S."/>
        </authorList>
    </citation>
    <scope>NUCLEOTIDE SEQUENCE [LARGE SCALE GENOMIC DNA]</scope>
    <source>
        <strain>cv. Columbia</strain>
    </source>
</reference>
<reference key="2">
    <citation type="journal article" date="2017" name="Plant J.">
        <title>Araport11: a complete reannotation of the Arabidopsis thaliana reference genome.</title>
        <authorList>
            <person name="Cheng C.Y."/>
            <person name="Krishnakumar V."/>
            <person name="Chan A.P."/>
            <person name="Thibaud-Nissen F."/>
            <person name="Schobel S."/>
            <person name="Town C.D."/>
        </authorList>
    </citation>
    <scope>GENOME REANNOTATION</scope>
    <source>
        <strain>cv. Columbia</strain>
    </source>
</reference>
<reference key="3">
    <citation type="journal article" date="2001" name="Plant Physiol.">
        <title>A large family of genes that share homology with CLAVATA3.</title>
        <authorList>
            <person name="Cock J.M."/>
            <person name="McCormick S."/>
        </authorList>
    </citation>
    <scope>GENE FAMILY</scope>
    <scope>NOMENCLATURE</scope>
</reference>
<reference key="4">
    <citation type="journal article" date="2003" name="Plant Mol. Biol.">
        <title>The Arabidopsis CLV3-like (CLE) genes are expressed in diverse tissues and encode secreted proteins.</title>
        <authorList>
            <person name="Sharma V.K."/>
            <person name="Ramirez J."/>
            <person name="Fletcher J.C."/>
        </authorList>
    </citation>
    <scope>TISSUE SPECIFICITY</scope>
</reference>
<reference key="5">
    <citation type="journal article" date="2006" name="Plant Physiol.">
        <title>Evidence for functional conservation, sufficiency, and proteolytic processing of the CLAVATA3 CLE domain.</title>
        <authorList>
            <person name="Ni J."/>
            <person name="Clark S.E."/>
        </authorList>
    </citation>
    <scope>FUNCTION</scope>
</reference>
<reference key="6">
    <citation type="journal article" date="2006" name="Plant Physiol.">
        <title>Gain-of-function phenotypes of many CLAVATA3/ESR genes, including four new family members, correlate with tandem variations in the conserved CLAVATA3/ESR domain.</title>
        <authorList>
            <person name="Strabala T.J."/>
            <person name="O'donnell P.J."/>
            <person name="Smit A.-M."/>
            <person name="Ampomah-Dwamena C."/>
            <person name="Martin E.J."/>
            <person name="Netzler N."/>
            <person name="Nieuwenhuizen N.J."/>
            <person name="Quinn B.D."/>
            <person name="Foote H.C.C."/>
            <person name="Hudson K.R."/>
        </authorList>
    </citation>
    <scope>FUNCTION</scope>
    <scope>GENE FAMILY</scope>
</reference>
<reference key="7">
    <citation type="journal article" date="2006" name="Science">
        <title>Dodeca-CLE peptides as suppressors of plant stem cell differentiation.</title>
        <authorList>
            <person name="Ito Y."/>
            <person name="Nakanomyo I."/>
            <person name="Motose H."/>
            <person name="Iwamoto K."/>
            <person name="Sawa S."/>
            <person name="Dohmae N."/>
            <person name="Fukuda H."/>
        </authorList>
    </citation>
    <scope>FUNCTION</scope>
</reference>
<reference key="8">
    <citation type="journal article" date="2008" name="Cell. Mol. Life Sci.">
        <title>The CLE family of plant polypeptide signaling molecules.</title>
        <authorList>
            <person name="Jun J.H."/>
            <person name="Fiume E."/>
            <person name="Fletcher J.C."/>
        </authorList>
    </citation>
    <scope>REVIEW</scope>
</reference>
<reference key="9">
    <citation type="journal article" date="2008" name="Curr. Opin. Plant Biol.">
        <title>Diverse and conserved roles of CLE peptides.</title>
        <authorList>
            <person name="Mitchum M.G."/>
            <person name="Wang X."/>
            <person name="Davis E.L."/>
        </authorList>
    </citation>
    <scope>REVIEW</scope>
</reference>
<reference key="10">
    <citation type="journal article" date="2010" name="Protoplasma">
        <title>CLE peptide signaling during plant development.</title>
        <authorList>
            <person name="Wang G."/>
            <person name="Fiers M."/>
        </authorList>
    </citation>
    <scope>REVIEW</scope>
</reference>
<reference key="11">
    <citation type="journal article" date="2017" name="EMBO Rep.">
        <title>Perception of root-active CLE peptides requires CORYNE function in the phloem vasculature.</title>
        <authorList>
            <person name="Hazak O."/>
            <person name="Brandt B."/>
            <person name="Cattaneo P."/>
            <person name="Santiago J."/>
            <person name="Rodriguez-Villalon A."/>
            <person name="Hothorn M."/>
            <person name="Hardtke C.S."/>
        </authorList>
    </citation>
    <scope>FUNCTION</scope>
    <source>
        <strain>cv. Columbia</strain>
    </source>
</reference>
<keyword id="KW-0217">Developmental protein</keyword>
<keyword id="KW-0221">Differentiation</keyword>
<keyword id="KW-0325">Glycoprotein</keyword>
<keyword id="KW-0379">Hydroxylation</keyword>
<keyword id="KW-1185">Reference proteome</keyword>
<keyword id="KW-0964">Secreted</keyword>
<keyword id="KW-0732">Signal</keyword>
<name>CLE21_ARATH</name>